<gene>
    <name evidence="1" type="primary">rpsN</name>
    <name type="ordered locus">Shal_4121</name>
</gene>
<name>RS14_SHEHH</name>
<comment type="function">
    <text evidence="1">Binds 16S rRNA, required for the assembly of 30S particles and may also be responsible for determining the conformation of the 16S rRNA at the A site.</text>
</comment>
<comment type="subunit">
    <text evidence="1">Part of the 30S ribosomal subunit. Contacts proteins S3 and S10.</text>
</comment>
<comment type="similarity">
    <text evidence="1">Belongs to the universal ribosomal protein uS14 family.</text>
</comment>
<dbReference type="EMBL" id="CP000931">
    <property type="protein sequence ID" value="ABZ78661.1"/>
    <property type="molecule type" value="Genomic_DNA"/>
</dbReference>
<dbReference type="RefSeq" id="WP_012153467.1">
    <property type="nucleotide sequence ID" value="NC_010334.1"/>
</dbReference>
<dbReference type="SMR" id="B0TLZ9"/>
<dbReference type="STRING" id="458817.Shal_4121"/>
<dbReference type="KEGG" id="shl:Shal_4121"/>
<dbReference type="eggNOG" id="COG0199">
    <property type="taxonomic scope" value="Bacteria"/>
</dbReference>
<dbReference type="HOGENOM" id="CLU_139869_0_1_6"/>
<dbReference type="OrthoDB" id="9810484at2"/>
<dbReference type="Proteomes" id="UP000001317">
    <property type="component" value="Chromosome"/>
</dbReference>
<dbReference type="GO" id="GO:0005737">
    <property type="term" value="C:cytoplasm"/>
    <property type="evidence" value="ECO:0007669"/>
    <property type="project" value="UniProtKB-ARBA"/>
</dbReference>
<dbReference type="GO" id="GO:0015935">
    <property type="term" value="C:small ribosomal subunit"/>
    <property type="evidence" value="ECO:0007669"/>
    <property type="project" value="TreeGrafter"/>
</dbReference>
<dbReference type="GO" id="GO:0019843">
    <property type="term" value="F:rRNA binding"/>
    <property type="evidence" value="ECO:0007669"/>
    <property type="project" value="UniProtKB-UniRule"/>
</dbReference>
<dbReference type="GO" id="GO:0003735">
    <property type="term" value="F:structural constituent of ribosome"/>
    <property type="evidence" value="ECO:0007669"/>
    <property type="project" value="InterPro"/>
</dbReference>
<dbReference type="GO" id="GO:0006412">
    <property type="term" value="P:translation"/>
    <property type="evidence" value="ECO:0007669"/>
    <property type="project" value="UniProtKB-UniRule"/>
</dbReference>
<dbReference type="FunFam" id="1.10.287.1480:FF:000001">
    <property type="entry name" value="30S ribosomal protein S14"/>
    <property type="match status" value="1"/>
</dbReference>
<dbReference type="Gene3D" id="1.10.287.1480">
    <property type="match status" value="1"/>
</dbReference>
<dbReference type="HAMAP" id="MF_00537">
    <property type="entry name" value="Ribosomal_uS14_1"/>
    <property type="match status" value="1"/>
</dbReference>
<dbReference type="InterPro" id="IPR001209">
    <property type="entry name" value="Ribosomal_uS14"/>
</dbReference>
<dbReference type="InterPro" id="IPR023036">
    <property type="entry name" value="Ribosomal_uS14_bac/plastid"/>
</dbReference>
<dbReference type="InterPro" id="IPR018271">
    <property type="entry name" value="Ribosomal_uS14_CS"/>
</dbReference>
<dbReference type="NCBIfam" id="NF006477">
    <property type="entry name" value="PRK08881.1"/>
    <property type="match status" value="1"/>
</dbReference>
<dbReference type="PANTHER" id="PTHR19836">
    <property type="entry name" value="30S RIBOSOMAL PROTEIN S14"/>
    <property type="match status" value="1"/>
</dbReference>
<dbReference type="PANTHER" id="PTHR19836:SF19">
    <property type="entry name" value="SMALL RIBOSOMAL SUBUNIT PROTEIN US14M"/>
    <property type="match status" value="1"/>
</dbReference>
<dbReference type="Pfam" id="PF00253">
    <property type="entry name" value="Ribosomal_S14"/>
    <property type="match status" value="1"/>
</dbReference>
<dbReference type="SUPFAM" id="SSF57716">
    <property type="entry name" value="Glucocorticoid receptor-like (DNA-binding domain)"/>
    <property type="match status" value="1"/>
</dbReference>
<dbReference type="PROSITE" id="PS00527">
    <property type="entry name" value="RIBOSOMAL_S14"/>
    <property type="match status" value="1"/>
</dbReference>
<reference key="1">
    <citation type="submission" date="2008-01" db="EMBL/GenBank/DDBJ databases">
        <title>Complete sequence of Shewanella halifaxensis HAW-EB4.</title>
        <authorList>
            <consortium name="US DOE Joint Genome Institute"/>
            <person name="Copeland A."/>
            <person name="Lucas S."/>
            <person name="Lapidus A."/>
            <person name="Glavina del Rio T."/>
            <person name="Dalin E."/>
            <person name="Tice H."/>
            <person name="Bruce D."/>
            <person name="Goodwin L."/>
            <person name="Pitluck S."/>
            <person name="Sims D."/>
            <person name="Brettin T."/>
            <person name="Detter J.C."/>
            <person name="Han C."/>
            <person name="Kuske C.R."/>
            <person name="Schmutz J."/>
            <person name="Larimer F."/>
            <person name="Land M."/>
            <person name="Hauser L."/>
            <person name="Kyrpides N."/>
            <person name="Kim E."/>
            <person name="Zhao J.-S."/>
            <person name="Richardson P."/>
        </authorList>
    </citation>
    <scope>NUCLEOTIDE SEQUENCE [LARGE SCALE GENOMIC DNA]</scope>
    <source>
        <strain>HAW-EB4</strain>
    </source>
</reference>
<feature type="chain" id="PRO_1000128575" description="Small ribosomal subunit protein uS14">
    <location>
        <begin position="1"/>
        <end position="101"/>
    </location>
</feature>
<keyword id="KW-0687">Ribonucleoprotein</keyword>
<keyword id="KW-0689">Ribosomal protein</keyword>
<keyword id="KW-0694">RNA-binding</keyword>
<keyword id="KW-0699">rRNA-binding</keyword>
<organism>
    <name type="scientific">Shewanella halifaxensis (strain HAW-EB4)</name>
    <dbReference type="NCBI Taxonomy" id="458817"/>
    <lineage>
        <taxon>Bacteria</taxon>
        <taxon>Pseudomonadati</taxon>
        <taxon>Pseudomonadota</taxon>
        <taxon>Gammaproteobacteria</taxon>
        <taxon>Alteromonadales</taxon>
        <taxon>Shewanellaceae</taxon>
        <taxon>Shewanella</taxon>
    </lineage>
</organism>
<proteinExistence type="inferred from homology"/>
<evidence type="ECO:0000255" key="1">
    <source>
        <dbReference type="HAMAP-Rule" id="MF_00537"/>
    </source>
</evidence>
<evidence type="ECO:0000305" key="2"/>
<accession>B0TLZ9</accession>
<sequence>MAKSSMKAREAKRAQLVAKFAEKRAALKAIISSPTTSDDDRWDAVLKLQALPRDSSAARQRNRCSQTGRPHGFLRKFGLSRIKLREATMRGEVPGLRKASW</sequence>
<protein>
    <recommendedName>
        <fullName evidence="1">Small ribosomal subunit protein uS14</fullName>
    </recommendedName>
    <alternativeName>
        <fullName evidence="2">30S ribosomal protein S14</fullName>
    </alternativeName>
</protein>